<protein>
    <recommendedName>
        <fullName evidence="1">Large ribosomal subunit protein uL18</fullName>
    </recommendedName>
    <alternativeName>
        <fullName evidence="2">50S ribosomal protein L18</fullName>
    </alternativeName>
</protein>
<name>RL18_HERA2</name>
<proteinExistence type="inferred from homology"/>
<organism>
    <name type="scientific">Herpetosiphon aurantiacus (strain ATCC 23779 / DSM 785 / 114-95)</name>
    <dbReference type="NCBI Taxonomy" id="316274"/>
    <lineage>
        <taxon>Bacteria</taxon>
        <taxon>Bacillati</taxon>
        <taxon>Chloroflexota</taxon>
        <taxon>Chloroflexia</taxon>
        <taxon>Herpetosiphonales</taxon>
        <taxon>Herpetosiphonaceae</taxon>
        <taxon>Herpetosiphon</taxon>
    </lineage>
</organism>
<dbReference type="EMBL" id="CP000875">
    <property type="protein sequence ID" value="ABX07560.1"/>
    <property type="molecule type" value="Genomic_DNA"/>
</dbReference>
<dbReference type="SMR" id="A9B427"/>
<dbReference type="FunCoup" id="A9B427">
    <property type="interactions" value="461"/>
</dbReference>
<dbReference type="STRING" id="316274.Haur_4930"/>
<dbReference type="KEGG" id="hau:Haur_4930"/>
<dbReference type="eggNOG" id="COG0256">
    <property type="taxonomic scope" value="Bacteria"/>
</dbReference>
<dbReference type="HOGENOM" id="CLU_098841_0_1_0"/>
<dbReference type="InParanoid" id="A9B427"/>
<dbReference type="Proteomes" id="UP000000787">
    <property type="component" value="Chromosome"/>
</dbReference>
<dbReference type="GO" id="GO:0022625">
    <property type="term" value="C:cytosolic large ribosomal subunit"/>
    <property type="evidence" value="ECO:0007669"/>
    <property type="project" value="TreeGrafter"/>
</dbReference>
<dbReference type="GO" id="GO:0008097">
    <property type="term" value="F:5S rRNA binding"/>
    <property type="evidence" value="ECO:0007669"/>
    <property type="project" value="TreeGrafter"/>
</dbReference>
<dbReference type="GO" id="GO:0003735">
    <property type="term" value="F:structural constituent of ribosome"/>
    <property type="evidence" value="ECO:0007669"/>
    <property type="project" value="InterPro"/>
</dbReference>
<dbReference type="GO" id="GO:0006412">
    <property type="term" value="P:translation"/>
    <property type="evidence" value="ECO:0007669"/>
    <property type="project" value="UniProtKB-UniRule"/>
</dbReference>
<dbReference type="CDD" id="cd00432">
    <property type="entry name" value="Ribosomal_L18_L5e"/>
    <property type="match status" value="1"/>
</dbReference>
<dbReference type="FunFam" id="3.30.420.100:FF:000001">
    <property type="entry name" value="50S ribosomal protein L18"/>
    <property type="match status" value="1"/>
</dbReference>
<dbReference type="Gene3D" id="3.30.420.100">
    <property type="match status" value="1"/>
</dbReference>
<dbReference type="HAMAP" id="MF_01337_B">
    <property type="entry name" value="Ribosomal_uL18_B"/>
    <property type="match status" value="1"/>
</dbReference>
<dbReference type="InterPro" id="IPR004389">
    <property type="entry name" value="Ribosomal_uL18_bac-type"/>
</dbReference>
<dbReference type="InterPro" id="IPR005484">
    <property type="entry name" value="Ribosomal_uL18_bac/euk"/>
</dbReference>
<dbReference type="NCBIfam" id="TIGR00060">
    <property type="entry name" value="L18_bact"/>
    <property type="match status" value="1"/>
</dbReference>
<dbReference type="PANTHER" id="PTHR12899">
    <property type="entry name" value="39S RIBOSOMAL PROTEIN L18, MITOCHONDRIAL"/>
    <property type="match status" value="1"/>
</dbReference>
<dbReference type="PANTHER" id="PTHR12899:SF3">
    <property type="entry name" value="LARGE RIBOSOMAL SUBUNIT PROTEIN UL18M"/>
    <property type="match status" value="1"/>
</dbReference>
<dbReference type="Pfam" id="PF00861">
    <property type="entry name" value="Ribosomal_L18p"/>
    <property type="match status" value="1"/>
</dbReference>
<dbReference type="SUPFAM" id="SSF53137">
    <property type="entry name" value="Translational machinery components"/>
    <property type="match status" value="1"/>
</dbReference>
<comment type="function">
    <text evidence="1">This is one of the proteins that bind and probably mediate the attachment of the 5S RNA into the large ribosomal subunit, where it forms part of the central protuberance.</text>
</comment>
<comment type="subunit">
    <text evidence="1">Part of the 50S ribosomal subunit; part of the 5S rRNA/L5/L18/L25 subcomplex. Contacts the 5S and 23S rRNAs.</text>
</comment>
<comment type="similarity">
    <text evidence="1">Belongs to the universal ribosomal protein uL18 family.</text>
</comment>
<gene>
    <name evidence="1" type="primary">rplR</name>
    <name type="ordered locus">Haur_4930</name>
</gene>
<sequence>MSKFTSRELRARRHRRLRGQLSGTPERPRLNVFRSGLNIYAQVIDDLAGHTLVSASTIDTELRGSLGEQRKLEQAHSVGKAVAERARAAGITKVVFDRGGYKYHGRVKAVAEGAREGGLEF</sequence>
<evidence type="ECO:0000255" key="1">
    <source>
        <dbReference type="HAMAP-Rule" id="MF_01337"/>
    </source>
</evidence>
<evidence type="ECO:0000305" key="2"/>
<feature type="chain" id="PRO_1000142677" description="Large ribosomal subunit protein uL18">
    <location>
        <begin position="1"/>
        <end position="121"/>
    </location>
</feature>
<reference key="1">
    <citation type="journal article" date="2011" name="Stand. Genomic Sci.">
        <title>Complete genome sequence of the filamentous gliding predatory bacterium Herpetosiphon aurantiacus type strain (114-95(T)).</title>
        <authorList>
            <person name="Kiss H."/>
            <person name="Nett M."/>
            <person name="Domin N."/>
            <person name="Martin K."/>
            <person name="Maresca J.A."/>
            <person name="Copeland A."/>
            <person name="Lapidus A."/>
            <person name="Lucas S."/>
            <person name="Berry K.W."/>
            <person name="Glavina Del Rio T."/>
            <person name="Dalin E."/>
            <person name="Tice H."/>
            <person name="Pitluck S."/>
            <person name="Richardson P."/>
            <person name="Bruce D."/>
            <person name="Goodwin L."/>
            <person name="Han C."/>
            <person name="Detter J.C."/>
            <person name="Schmutz J."/>
            <person name="Brettin T."/>
            <person name="Land M."/>
            <person name="Hauser L."/>
            <person name="Kyrpides N.C."/>
            <person name="Ivanova N."/>
            <person name="Goeker M."/>
            <person name="Woyke T."/>
            <person name="Klenk H.P."/>
            <person name="Bryant D.A."/>
        </authorList>
    </citation>
    <scope>NUCLEOTIDE SEQUENCE [LARGE SCALE GENOMIC DNA]</scope>
    <source>
        <strain>ATCC 23779 / DSM 785 / 114-95</strain>
    </source>
</reference>
<accession>A9B427</accession>
<keyword id="KW-0687">Ribonucleoprotein</keyword>
<keyword id="KW-0689">Ribosomal protein</keyword>
<keyword id="KW-0694">RNA-binding</keyword>
<keyword id="KW-0699">rRNA-binding</keyword>